<feature type="chain" id="PRO_0000403996" description="2,3-dimethylmalate lyase">
    <location>
        <begin position="1"/>
        <end position="289"/>
    </location>
</feature>
<comment type="function">
    <text evidence="3">Catalyzes the formation of proponate and pyruvate from (2R,3S)-2,3-dimethylmalate. Has no activity toward dimethylmaleate, malate, citramalate, isocitrate and citrate.</text>
</comment>
<comment type="catalytic activity">
    <reaction evidence="3 4">
        <text>(2R,3S)-2,3-dimethylmalate = propanoate + pyruvate</text>
        <dbReference type="Rhea" id="RHEA:10472"/>
        <dbReference type="ChEBI" id="CHEBI:15361"/>
        <dbReference type="ChEBI" id="CHEBI:17272"/>
        <dbReference type="ChEBI" id="CHEBI:57422"/>
        <dbReference type="EC" id="4.1.3.32"/>
    </reaction>
</comment>
<comment type="cofactor">
    <cofactor evidence="2">
        <name>Mg(2+)</name>
        <dbReference type="ChEBI" id="CHEBI:18420"/>
    </cofactor>
</comment>
<comment type="activity regulation">
    <text evidence="3">Completely inhibited by propionic anhydride and by cystamine. Irreversibly inhibited by the mercapto reagents iodoacetate and iodoacetamide. Unaffected by hydroxylamine.</text>
</comment>
<comment type="biophysicochemical properties">
    <kinetics>
        <KM evidence="3">0.66 mM for 2,3-dimethylmalate</KM>
    </kinetics>
</comment>
<comment type="pathway">
    <text evidence="2">Cofactor degradation; nicotinate degradation; propanoate and pyruvate from 6-hydroxynicotinate: step 8/8.</text>
</comment>
<comment type="subunit">
    <text evidence="2">Homotetramer.</text>
</comment>
<comment type="similarity">
    <text evidence="1">Belongs to the isocitrate lyase/PEP mutase superfamily.</text>
</comment>
<evidence type="ECO:0000255" key="1"/>
<evidence type="ECO:0000269" key="2">
    <source>
    </source>
</evidence>
<evidence type="ECO:0000269" key="3">
    <source>
    </source>
</evidence>
<evidence type="ECO:0000269" key="4">
    <source>
    </source>
</evidence>
<evidence type="ECO:0000305" key="5"/>
<evidence type="ECO:0000312" key="6">
    <source>
        <dbReference type="EMBL" id="ABC88406.1"/>
    </source>
</evidence>
<proteinExistence type="evidence at protein level"/>
<gene>
    <name evidence="6" type="primary">Dml</name>
</gene>
<organism>
    <name type="scientific">Eubacterium barkeri</name>
    <name type="common">Clostridium barkeri</name>
    <dbReference type="NCBI Taxonomy" id="1528"/>
    <lineage>
        <taxon>Bacteria</taxon>
        <taxon>Bacillati</taxon>
        <taxon>Bacillota</taxon>
        <taxon>Clostridia</taxon>
        <taxon>Eubacteriales</taxon>
        <taxon>Eubacteriaceae</taxon>
        <taxon>Eubacterium</taxon>
    </lineage>
</organism>
<sequence>MNTAAKMRELLSTKKMVVAPGAHDAMTAKVIGRLGFDAVYMTGYGQSASHLGQPDVGLLTMTEMVARANAIVEAAGVPVIADADTGFGNAVNVMRTVREYEKAGVAVIQLEDQVMPKKCGHMVGREIVSKEEMVGKIKAAVDTRVNPDFMIMARTDARTTKGIDEALERGLAYKEAGADIIFIESPEGEEEMKRINETIPGYTLANMVEGGRTPLLKNAELEALGYNITIYPTASIYVATKAMVDLWTALKNDDTTAGVMDTMVTFSEFNDLMGLEKIREVEHNYATGR</sequence>
<dbReference type="EC" id="4.1.3.32"/>
<dbReference type="EMBL" id="DQ310789">
    <property type="protein sequence ID" value="ABC88406.1"/>
    <property type="molecule type" value="Genomic_DNA"/>
</dbReference>
<dbReference type="RefSeq" id="WP_090245334.1">
    <property type="nucleotide sequence ID" value="NZ_FNOU01000012.1"/>
</dbReference>
<dbReference type="SMR" id="Q0QLE4"/>
<dbReference type="STRING" id="1528.SAMN04488579_1126"/>
<dbReference type="KEGG" id="ag:ABC88406"/>
<dbReference type="OrthoDB" id="8629576at2"/>
<dbReference type="BioCyc" id="MetaCyc:MONOMER-11714"/>
<dbReference type="UniPathway" id="UPA01010">
    <property type="reaction ID" value="UER01019"/>
</dbReference>
<dbReference type="GO" id="GO:0047529">
    <property type="term" value="F:2,3-dimethylmalate lyase activity"/>
    <property type="evidence" value="ECO:0000314"/>
    <property type="project" value="UniProtKB"/>
</dbReference>
<dbReference type="GO" id="GO:0046872">
    <property type="term" value="F:metal ion binding"/>
    <property type="evidence" value="ECO:0007669"/>
    <property type="project" value="UniProtKB-KW"/>
</dbReference>
<dbReference type="GO" id="GO:1901848">
    <property type="term" value="P:nicotinate catabolic process"/>
    <property type="evidence" value="ECO:0000314"/>
    <property type="project" value="UniProtKB"/>
</dbReference>
<dbReference type="CDD" id="cd00377">
    <property type="entry name" value="ICL_PEPM"/>
    <property type="match status" value="1"/>
</dbReference>
<dbReference type="FunFam" id="3.20.20.60:FF:000088">
    <property type="entry name" value="Carboxyvinyl-carboxyphosphonate phosphorylmutase"/>
    <property type="match status" value="1"/>
</dbReference>
<dbReference type="Gene3D" id="3.20.20.60">
    <property type="entry name" value="Phosphoenolpyruvate-binding domains"/>
    <property type="match status" value="1"/>
</dbReference>
<dbReference type="InterPro" id="IPR039556">
    <property type="entry name" value="ICL/PEPM"/>
</dbReference>
<dbReference type="InterPro" id="IPR018523">
    <property type="entry name" value="Isocitrate_lyase_ph_CS"/>
</dbReference>
<dbReference type="InterPro" id="IPR015813">
    <property type="entry name" value="Pyrv/PenolPyrv_kinase-like_dom"/>
</dbReference>
<dbReference type="InterPro" id="IPR040442">
    <property type="entry name" value="Pyrv_kinase-like_dom_sf"/>
</dbReference>
<dbReference type="PANTHER" id="PTHR42905:SF5">
    <property type="entry name" value="CARBOXYVINYL-CARBOXYPHOSPHONATE PHOSPHORYLMUTASE, CHLOROPLASTIC"/>
    <property type="match status" value="1"/>
</dbReference>
<dbReference type="PANTHER" id="PTHR42905">
    <property type="entry name" value="PHOSPHOENOLPYRUVATE CARBOXYLASE"/>
    <property type="match status" value="1"/>
</dbReference>
<dbReference type="Pfam" id="PF13714">
    <property type="entry name" value="PEP_mutase"/>
    <property type="match status" value="1"/>
</dbReference>
<dbReference type="SUPFAM" id="SSF51621">
    <property type="entry name" value="Phosphoenolpyruvate/pyruvate domain"/>
    <property type="match status" value="1"/>
</dbReference>
<dbReference type="PROSITE" id="PS00161">
    <property type="entry name" value="ISOCITRATE_LYASE"/>
    <property type="match status" value="1"/>
</dbReference>
<protein>
    <recommendedName>
        <fullName evidence="6">2,3-dimethylmalate lyase</fullName>
        <ecNumber>4.1.3.32</ecNumber>
    </recommendedName>
</protein>
<reference evidence="5 6" key="1">
    <citation type="journal article" date="2006" name="Proc. Natl. Acad. Sci. U.S.A.">
        <title>Molecular and functional analysis of nicotinate catabolism in Eubacterium barkeri.</title>
        <authorList>
            <person name="Alhapel A."/>
            <person name="Darley D.J."/>
            <person name="Wagener N."/>
            <person name="Eckel E."/>
            <person name="Elsner N."/>
            <person name="Pierik A.J."/>
        </authorList>
    </citation>
    <scope>NUCLEOTIDE SEQUENCE [GENOMIC DNA]</scope>
    <scope>PATHWAY</scope>
    <scope>COFACTOR</scope>
    <scope>SUBUNIT</scope>
    <source>
        <strain evidence="6">ATCC 25849 / DSM 1223 / JCM 1389 / NCIMB 10623 / VKM B-1775 / VPI 5359</strain>
    </source>
</reference>
<reference evidence="5" key="2">
    <citation type="journal article" date="1979" name="Hoppe-Seyler's Z. Physiol. Chem.">
        <title>Nicotinic acid metabolism. 2,3-Dimethylmalate lyase.</title>
        <authorList>
            <person name="Pirzer P."/>
            <person name="Lill U."/>
            <person name="Eggerer H."/>
        </authorList>
    </citation>
    <scope>FUNCTION</scope>
    <scope>CATALYTIC ACTIVITY</scope>
    <scope>ACTIVITY REGULATION</scope>
    <scope>BIOPHYSICOCHEMICAL PROPERTIES</scope>
    <source>
        <strain evidence="3">ATCC 25849 / DSM 1223 / JCM 1389 / NCIMB 10623 / VKM B-1775 / VPI 5359</strain>
    </source>
</reference>
<reference evidence="5" key="3">
    <citation type="journal article" date="1980" name="Hoppe-Seyler's Z. Physiol. Chem.">
        <title>Nicotinic acid metabolism enzymic preparation and absolute configuration of the substrate for 2,3-dimethylmalate lyase.</title>
        <authorList>
            <person name="Lill U."/>
            <person name="Pirzer P."/>
            <person name="Kukla D."/>
            <person name="Huber R."/>
            <person name="Eggerer H."/>
        </authorList>
    </citation>
    <scope>CATALYTIC ACTIVITY</scope>
    <source>
        <strain evidence="4">ATCC 25849 / DSM 1223 / JCM 1389 / NCIMB 10623 / VKM B-1775 / VPI 5359</strain>
    </source>
</reference>
<accession>Q0QLE4</accession>
<name>DML_EUBBA</name>
<keyword id="KW-0456">Lyase</keyword>
<keyword id="KW-0460">Magnesium</keyword>
<keyword id="KW-0479">Metal-binding</keyword>